<comment type="function">
    <text evidence="1 2">Component of the viral envelope that plays a central role in virus morphogenesis and assembly via its interactions with other viral proteins.</text>
</comment>
<comment type="subunit">
    <text evidence="1 2">Homomultimer. Interacts with envelope E protein in the budding compartment of the host cell, which is located between endoplasmic reticulum and the Golgi complex. Forms a complex with HE and S proteins. Interacts with nucleocapsid N protein. This interaction probably participates in RNA packaging into the virus.</text>
</comment>
<comment type="subcellular location">
    <subcellularLocation>
        <location evidence="1">Virion membrane</location>
        <topology evidence="1">Multi-pass membrane protein</topology>
    </subcellularLocation>
    <subcellularLocation>
        <location evidence="1">Host Golgi apparatus membrane</location>
        <topology evidence="1">Multi-pass membrane protein</topology>
    </subcellularLocation>
    <text evidence="1">Largely embedded in the lipid bilayer.</text>
</comment>
<comment type="similarity">
    <text evidence="1">Belongs to the gammacoronaviruses M protein family.</text>
</comment>
<keyword id="KW-0325">Glycoprotein</keyword>
<keyword id="KW-1040">Host Golgi apparatus</keyword>
<keyword id="KW-1043">Host membrane</keyword>
<keyword id="KW-0472">Membrane</keyword>
<keyword id="KW-0812">Transmembrane</keyword>
<keyword id="KW-1133">Transmembrane helix</keyword>
<keyword id="KW-0261">Viral envelope protein</keyword>
<keyword id="KW-0468">Viral matrix protein</keyword>
<keyword id="KW-0946">Virion</keyword>
<accession>P12649</accession>
<reference key="1">
    <citation type="journal article" date="1988" name="Virology">
        <title>Cloning and sequencing of genes encoding structural proteins of avian infectious bronchitis virus.</title>
        <authorList>
            <person name="Sutou S."/>
            <person name="Sato S."/>
            <person name="Okabe T."/>
            <person name="Nakai M."/>
            <person name="Sasaki N."/>
        </authorList>
    </citation>
    <scope>NUCLEOTIDE SEQUENCE [GENOMIC RNA]</scope>
</reference>
<organism>
    <name type="scientific">Avian infectious bronchitis virus (strain KB8523)</name>
    <name type="common">IBV</name>
    <dbReference type="NCBI Taxonomy" id="11126"/>
    <lineage>
        <taxon>Viruses</taxon>
        <taxon>Riboviria</taxon>
        <taxon>Orthornavirae</taxon>
        <taxon>Pisuviricota</taxon>
        <taxon>Pisoniviricetes</taxon>
        <taxon>Nidovirales</taxon>
        <taxon>Cornidovirineae</taxon>
        <taxon>Coronaviridae</taxon>
        <taxon>Orthocoronavirinae</taxon>
        <taxon>Gammacoronavirus</taxon>
        <taxon>Igacovirus</taxon>
        <taxon>Avian coronavirus</taxon>
    </lineage>
</organism>
<gene>
    <name evidence="1" type="primary">M</name>
</gene>
<protein>
    <recommendedName>
        <fullName evidence="1">Membrane protein</fullName>
        <shortName evidence="1">M protein</shortName>
    </recommendedName>
    <alternativeName>
        <fullName evidence="1">E1 glycoprotein</fullName>
    </alternativeName>
    <alternativeName>
        <fullName evidence="1">Matrix glycoprotein</fullName>
    </alternativeName>
    <alternativeName>
        <fullName evidence="1">Membrane glycoprotein</fullName>
    </alternativeName>
</protein>
<name>VME1_IBVK</name>
<organismHost>
    <name type="scientific">Gallus gallus</name>
    <name type="common">Chicken</name>
    <dbReference type="NCBI Taxonomy" id="9031"/>
</organismHost>
<dbReference type="EMBL" id="M21515">
    <property type="protein sequence ID" value="AAA66581.1"/>
    <property type="molecule type" value="Genomic_RNA"/>
</dbReference>
<dbReference type="PIR" id="C29249">
    <property type="entry name" value="MMIHAI"/>
</dbReference>
<dbReference type="SMR" id="P12649"/>
<dbReference type="GO" id="GO:0044178">
    <property type="term" value="C:host cell Golgi membrane"/>
    <property type="evidence" value="ECO:0007669"/>
    <property type="project" value="UniProtKB-SubCell"/>
</dbReference>
<dbReference type="GO" id="GO:0016020">
    <property type="term" value="C:membrane"/>
    <property type="evidence" value="ECO:0007669"/>
    <property type="project" value="UniProtKB-UniRule"/>
</dbReference>
<dbReference type="GO" id="GO:0019031">
    <property type="term" value="C:viral envelope"/>
    <property type="evidence" value="ECO:0007669"/>
    <property type="project" value="UniProtKB-UniRule"/>
</dbReference>
<dbReference type="GO" id="GO:0055036">
    <property type="term" value="C:virion membrane"/>
    <property type="evidence" value="ECO:0007669"/>
    <property type="project" value="UniProtKB-SubCell"/>
</dbReference>
<dbReference type="GO" id="GO:0039660">
    <property type="term" value="F:structural constituent of virion"/>
    <property type="evidence" value="ECO:0007669"/>
    <property type="project" value="UniProtKB-UniRule"/>
</dbReference>
<dbReference type="CDD" id="cd21566">
    <property type="entry name" value="gammaCoV_M"/>
    <property type="match status" value="1"/>
</dbReference>
<dbReference type="HAMAP" id="MF_04203">
    <property type="entry name" value="GAMMA_CORONA_M"/>
    <property type="match status" value="1"/>
</dbReference>
<dbReference type="InterPro" id="IPR042550">
    <property type="entry name" value="GAMMA_CORONA_M"/>
</dbReference>
<dbReference type="InterPro" id="IPR002574">
    <property type="entry name" value="M_CoV"/>
</dbReference>
<dbReference type="Pfam" id="PF01635">
    <property type="entry name" value="CoV_M"/>
    <property type="match status" value="1"/>
</dbReference>
<dbReference type="PROSITE" id="PS51927">
    <property type="entry name" value="COV_M"/>
    <property type="match status" value="1"/>
</dbReference>
<proteinExistence type="inferred from homology"/>
<evidence type="ECO:0000255" key="1">
    <source>
        <dbReference type="HAMAP-Rule" id="MF_04203"/>
    </source>
</evidence>
<evidence type="ECO:0000255" key="2">
    <source>
        <dbReference type="PROSITE-ProRule" id="PRU01275"/>
    </source>
</evidence>
<feature type="chain" id="PRO_0000106056" description="Membrane protein">
    <location>
        <begin position="1"/>
        <end position="225"/>
    </location>
</feature>
<feature type="topological domain" description="Virion surface" evidence="1">
    <location>
        <begin position="1"/>
        <end position="20"/>
    </location>
</feature>
<feature type="transmembrane region" description="Helical" evidence="1">
    <location>
        <begin position="21"/>
        <end position="41"/>
    </location>
</feature>
<feature type="topological domain" description="Intravirion" evidence="1">
    <location>
        <begin position="42"/>
        <end position="51"/>
    </location>
</feature>
<feature type="transmembrane region" description="Helical" evidence="1">
    <location>
        <begin position="52"/>
        <end position="72"/>
    </location>
</feature>
<feature type="topological domain" description="Virion surface" evidence="1">
    <location>
        <begin position="73"/>
        <end position="77"/>
    </location>
</feature>
<feature type="transmembrane region" description="Helical" evidence="1">
    <location>
        <begin position="78"/>
        <end position="98"/>
    </location>
</feature>
<feature type="topological domain" description="Intravirion" evidence="1">
    <location>
        <begin position="99"/>
        <end position="225"/>
    </location>
</feature>
<sequence length="225" mass="25541">MSNETNCTLDFEQSVELFKEYNLFITAFLLFLTIILQYGYATRIRFIYILKMIVLWCFWPLNIAVGVISCIYPPNTGGLVAAIILTVFACLSFVGYWIQSCRLFKRCRSWWSFNPESNAVGSILLTNGQQCNFAIESVPMVLAPIIKNGVLYCEGQWLAKCEPDHLPKDIFVCTADRRNIYRMVQKYTGDQSGNKKRFATFVYAKQSVDTGELESVATGGSSLYT</sequence>